<reference key="1">
    <citation type="journal article" date="2009" name="Nature">
        <title>Evolution of pathogenicity and sexual reproduction in eight Candida genomes.</title>
        <authorList>
            <person name="Butler G."/>
            <person name="Rasmussen M.D."/>
            <person name="Lin M.F."/>
            <person name="Santos M.A.S."/>
            <person name="Sakthikumar S."/>
            <person name="Munro C.A."/>
            <person name="Rheinbay E."/>
            <person name="Grabherr M."/>
            <person name="Forche A."/>
            <person name="Reedy J.L."/>
            <person name="Agrafioti I."/>
            <person name="Arnaud M.B."/>
            <person name="Bates S."/>
            <person name="Brown A.J.P."/>
            <person name="Brunke S."/>
            <person name="Costanzo M.C."/>
            <person name="Fitzpatrick D.A."/>
            <person name="de Groot P.W.J."/>
            <person name="Harris D."/>
            <person name="Hoyer L.L."/>
            <person name="Hube B."/>
            <person name="Klis F.M."/>
            <person name="Kodira C."/>
            <person name="Lennard N."/>
            <person name="Logue M.E."/>
            <person name="Martin R."/>
            <person name="Neiman A.M."/>
            <person name="Nikolaou E."/>
            <person name="Quail M.A."/>
            <person name="Quinn J."/>
            <person name="Santos M.C."/>
            <person name="Schmitzberger F.F."/>
            <person name="Sherlock G."/>
            <person name="Shah P."/>
            <person name="Silverstein K.A.T."/>
            <person name="Skrzypek M.S."/>
            <person name="Soll D."/>
            <person name="Staggs R."/>
            <person name="Stansfield I."/>
            <person name="Stumpf M.P.H."/>
            <person name="Sudbery P.E."/>
            <person name="Srikantha T."/>
            <person name="Zeng Q."/>
            <person name="Berman J."/>
            <person name="Berriman M."/>
            <person name="Heitman J."/>
            <person name="Gow N.A.R."/>
            <person name="Lorenz M.C."/>
            <person name="Birren B.W."/>
            <person name="Kellis M."/>
            <person name="Cuomo C.A."/>
        </authorList>
    </citation>
    <scope>NUCLEOTIDE SEQUENCE [LARGE SCALE GENOMIC DNA]</scope>
    <source>
        <strain>ATCC 11503 / BCRC 21390 / CBS 2605 / JCM 1781 / NBRC 1676 / NRRL YB-4239</strain>
    </source>
</reference>
<sequence>MGKTKSRGRRAEKKEAEKELLQNAQSLAGENDSKVSQPSNIPNTFFGLVDSTEIEYFKQAESTLNINAFETDEERNGFISSVLEEAQGKELKLVTNQICSKLMERLILFADSSQLKAIFETFSGHFASLAFHKYSSHVLETFLVRAAALIELELTQTDEDYNEGHGEERDKDYNEEQERRQKVQEQSLSEKKSVEEMFLNMVNELKPYLSTMIDHQYASHVLRLLILILAGKELPSTTTSNSTLRSKKSKIARKMIEIKDNEDFDRAYQTPPSFKNELREYIQIITKDLDTKRARELSIHKVASPVLQLIIRVEGLVDRERTLWHLVFAKQSEEKVPEEESFVEYLLSDSVGSHFFEGIIKNDGARPQYIERLYKLYMKDRVLKLARRATTGVYIIQALMFKLKPVEVEYILDIIIPELANLISIADNQNLDLARRIVDASIIRGNYRRDDIIQQLFLKFAPNYDLSNPQSSTSTEFLENALQLTGSTLGNTRDDWPTAEERRRALFLEKLMELDYRFIICAWLNFMALPVERFVQMCMHGVFSHVVENALVVEKDEPKNVQILRKRFLNIFQGNIVTLACNSYGSHIVDKLWNFTVFLPMYKDRVALELMGEATKVKDSNYGKLVWKNWGMELFARKKYDWKLLIKAQENEFLGVDEDTERPLKPIELKMNNLARERKEQQERAEQAQMGYNKRKLDELTGNGEKRQKVRGRRRE</sequence>
<keyword id="KW-0539">Nucleus</keyword>
<keyword id="KW-1185">Reference proteome</keyword>
<keyword id="KW-0677">Repeat</keyword>
<keyword id="KW-0690">Ribosome biogenesis</keyword>
<keyword id="KW-0698">rRNA processing</keyword>
<accession>A5DWG1</accession>
<comment type="function">
    <text evidence="1">RNA-binding nucleolar protein required for pre-rRNA processing. Involved in production of 18S rRNA and assembly of small ribosomal subunit (By similarity).</text>
</comment>
<comment type="subcellular location">
    <subcellularLocation>
        <location evidence="1">Nucleus</location>
        <location evidence="1">Nucleolus</location>
    </subcellularLocation>
</comment>
<comment type="similarity">
    <text evidence="3">Belongs to the NOP9 family.</text>
</comment>
<name>NOP9_LODEL</name>
<protein>
    <recommendedName>
        <fullName>Nucleolar protein 9</fullName>
    </recommendedName>
    <alternativeName>
        <fullName>Pumilio domain-containing protein NOP9</fullName>
    </alternativeName>
</protein>
<gene>
    <name type="primary">NOP9</name>
    <name type="ORF">LELG_01697</name>
</gene>
<evidence type="ECO:0000250" key="1"/>
<evidence type="ECO:0000256" key="2">
    <source>
        <dbReference type="SAM" id="MobiDB-lite"/>
    </source>
</evidence>
<evidence type="ECO:0000305" key="3"/>
<organism>
    <name type="scientific">Lodderomyces elongisporus (strain ATCC 11503 / CBS 2605 / JCM 1781 / NBRC 1676 / NRRL YB-4239)</name>
    <name type="common">Yeast</name>
    <name type="synonym">Saccharomyces elongisporus</name>
    <dbReference type="NCBI Taxonomy" id="379508"/>
    <lineage>
        <taxon>Eukaryota</taxon>
        <taxon>Fungi</taxon>
        <taxon>Dikarya</taxon>
        <taxon>Ascomycota</taxon>
        <taxon>Saccharomycotina</taxon>
        <taxon>Pichiomycetes</taxon>
        <taxon>Debaryomycetaceae</taxon>
        <taxon>Candida/Lodderomyces clade</taxon>
        <taxon>Lodderomyces</taxon>
    </lineage>
</organism>
<dbReference type="EMBL" id="CH981525">
    <property type="protein sequence ID" value="EDK43519.1"/>
    <property type="molecule type" value="Genomic_DNA"/>
</dbReference>
<dbReference type="RefSeq" id="XP_001526869.1">
    <property type="nucleotide sequence ID" value="XM_001526819.1"/>
</dbReference>
<dbReference type="SMR" id="A5DWG1"/>
<dbReference type="FunCoup" id="A5DWG1">
    <property type="interactions" value="907"/>
</dbReference>
<dbReference type="STRING" id="379508.A5DWG1"/>
<dbReference type="GeneID" id="5233782"/>
<dbReference type="KEGG" id="lel:PVL30_001670"/>
<dbReference type="VEuPathDB" id="FungiDB:LELG_01697"/>
<dbReference type="eggNOG" id="KOG2188">
    <property type="taxonomic scope" value="Eukaryota"/>
</dbReference>
<dbReference type="HOGENOM" id="CLU_008720_1_1_1"/>
<dbReference type="InParanoid" id="A5DWG1"/>
<dbReference type="OMA" id="CNSYGSH"/>
<dbReference type="OrthoDB" id="392571at2759"/>
<dbReference type="Proteomes" id="UP000001996">
    <property type="component" value="Unassembled WGS sequence"/>
</dbReference>
<dbReference type="GO" id="GO:0030686">
    <property type="term" value="C:90S preribosome"/>
    <property type="evidence" value="ECO:0007669"/>
    <property type="project" value="EnsemblFungi"/>
</dbReference>
<dbReference type="GO" id="GO:0005730">
    <property type="term" value="C:nucleolus"/>
    <property type="evidence" value="ECO:0007669"/>
    <property type="project" value="UniProtKB-SubCell"/>
</dbReference>
<dbReference type="GO" id="GO:0030688">
    <property type="term" value="C:preribosome, small subunit precursor"/>
    <property type="evidence" value="ECO:0007669"/>
    <property type="project" value="EnsemblFungi"/>
</dbReference>
<dbReference type="GO" id="GO:0032040">
    <property type="term" value="C:small-subunit processome"/>
    <property type="evidence" value="ECO:0007669"/>
    <property type="project" value="EnsemblFungi"/>
</dbReference>
<dbReference type="GO" id="GO:0003723">
    <property type="term" value="F:RNA binding"/>
    <property type="evidence" value="ECO:0007669"/>
    <property type="project" value="EnsemblFungi"/>
</dbReference>
<dbReference type="GO" id="GO:0000480">
    <property type="term" value="P:endonucleolytic cleavage in 5'-ETS of tricistronic rRNA transcript (SSU-rRNA, 5.8S rRNA, LSU-rRNA)"/>
    <property type="evidence" value="ECO:0007669"/>
    <property type="project" value="EnsemblFungi"/>
</dbReference>
<dbReference type="GO" id="GO:0000447">
    <property type="term" value="P:endonucleolytic cleavage in ITS1 to separate SSU-rRNA from 5.8S rRNA and LSU-rRNA from tricistronic rRNA transcript (SSU-rRNA, 5.8S rRNA, LSU-rRNA)"/>
    <property type="evidence" value="ECO:0007669"/>
    <property type="project" value="EnsemblFungi"/>
</dbReference>
<dbReference type="GO" id="GO:0000472">
    <property type="term" value="P:endonucleolytic cleavage to generate mature 5'-end of SSU-rRNA from (SSU-rRNA, 5.8S rRNA, LSU-rRNA)"/>
    <property type="evidence" value="ECO:0007669"/>
    <property type="project" value="EnsemblFungi"/>
</dbReference>
<dbReference type="GO" id="GO:0000056">
    <property type="term" value="P:ribosomal small subunit export from nucleus"/>
    <property type="evidence" value="ECO:0007669"/>
    <property type="project" value="EnsemblFungi"/>
</dbReference>
<dbReference type="Gene3D" id="1.25.10.10">
    <property type="entry name" value="Leucine-rich Repeat Variant"/>
    <property type="match status" value="2"/>
</dbReference>
<dbReference type="InterPro" id="IPR011989">
    <property type="entry name" value="ARM-like"/>
</dbReference>
<dbReference type="InterPro" id="IPR016024">
    <property type="entry name" value="ARM-type_fold"/>
</dbReference>
<dbReference type="InterPro" id="IPR040000">
    <property type="entry name" value="NOP9"/>
</dbReference>
<dbReference type="InterPro" id="IPR001313">
    <property type="entry name" value="Pumilio_RNA-bd_rpt"/>
</dbReference>
<dbReference type="PANTHER" id="PTHR13102">
    <property type="entry name" value="NUCLEOLAR PROTEIN 9"/>
    <property type="match status" value="1"/>
</dbReference>
<dbReference type="PANTHER" id="PTHR13102:SF0">
    <property type="entry name" value="NUCLEOLAR PROTEIN 9"/>
    <property type="match status" value="1"/>
</dbReference>
<dbReference type="Pfam" id="PF22493">
    <property type="entry name" value="PUF_NOP9"/>
    <property type="match status" value="1"/>
</dbReference>
<dbReference type="SMART" id="SM00025">
    <property type="entry name" value="Pumilio"/>
    <property type="match status" value="8"/>
</dbReference>
<dbReference type="SUPFAM" id="SSF48371">
    <property type="entry name" value="ARM repeat"/>
    <property type="match status" value="1"/>
</dbReference>
<proteinExistence type="inferred from homology"/>
<feature type="chain" id="PRO_0000407817" description="Nucleolar protein 9">
    <location>
        <begin position="1"/>
        <end position="716"/>
    </location>
</feature>
<feature type="repeat" description="Pumilio 1">
    <location>
        <begin position="85"/>
        <end position="120"/>
    </location>
</feature>
<feature type="repeat" description="Pumilio 2">
    <location>
        <begin position="121"/>
        <end position="156"/>
    </location>
</feature>
<feature type="repeat" description="Pumilio 3">
    <location>
        <begin position="204"/>
        <end position="240"/>
    </location>
</feature>
<feature type="repeat" description="Pumilio 4">
    <location>
        <begin position="288"/>
        <end position="325"/>
    </location>
</feature>
<feature type="repeat" description="Pumilio 5">
    <location>
        <begin position="338"/>
        <end position="375"/>
    </location>
</feature>
<feature type="repeat" description="Pumilio 6">
    <location>
        <begin position="377"/>
        <end position="413"/>
    </location>
</feature>
<feature type="repeat" description="Pumilio 7">
    <location>
        <begin position="528"/>
        <end position="565"/>
    </location>
</feature>
<feature type="repeat" description="Pumilio 8">
    <location>
        <begin position="571"/>
        <end position="608"/>
    </location>
</feature>
<feature type="region of interest" description="Disordered" evidence="2">
    <location>
        <begin position="1"/>
        <end position="38"/>
    </location>
</feature>
<feature type="region of interest" description="Disordered" evidence="2">
    <location>
        <begin position="159"/>
        <end position="188"/>
    </location>
</feature>
<feature type="region of interest" description="Disordered" evidence="2">
    <location>
        <begin position="675"/>
        <end position="716"/>
    </location>
</feature>
<feature type="compositionally biased region" description="Basic residues" evidence="2">
    <location>
        <begin position="1"/>
        <end position="11"/>
    </location>
</feature>
<feature type="compositionally biased region" description="Polar residues" evidence="2">
    <location>
        <begin position="22"/>
        <end position="38"/>
    </location>
</feature>
<feature type="compositionally biased region" description="Basic and acidic residues" evidence="2">
    <location>
        <begin position="162"/>
        <end position="188"/>
    </location>
</feature>
<feature type="compositionally biased region" description="Basic and acidic residues" evidence="2">
    <location>
        <begin position="675"/>
        <end position="686"/>
    </location>
</feature>
<feature type="compositionally biased region" description="Basic and acidic residues" evidence="2">
    <location>
        <begin position="695"/>
        <end position="707"/>
    </location>
</feature>